<feature type="chain" id="PRO_0000434460" description="UDP-glycosyltransferase 71K2">
    <location>
        <begin position="1"/>
        <end position="481"/>
    </location>
</feature>
<feature type="binding site" evidence="1">
    <location>
        <position position="285"/>
    </location>
    <ligand>
        <name>UDP-alpha-D-glucose</name>
        <dbReference type="ChEBI" id="CHEBI:58885"/>
    </ligand>
</feature>
<feature type="binding site" evidence="1">
    <location>
        <begin position="350"/>
        <end position="351"/>
    </location>
    <ligand>
        <name>UDP-alpha-D-glucose</name>
        <dbReference type="ChEBI" id="CHEBI:58885"/>
    </ligand>
</feature>
<feature type="binding site" evidence="1">
    <location>
        <begin position="368"/>
        <end position="376"/>
    </location>
    <ligand>
        <name>UDP-alpha-D-glucose</name>
        <dbReference type="ChEBI" id="CHEBI:58885"/>
    </ligand>
</feature>
<feature type="binding site" evidence="1">
    <location>
        <begin position="390"/>
        <end position="393"/>
    </location>
    <ligand>
        <name>UDP-alpha-D-glucose</name>
        <dbReference type="ChEBI" id="CHEBI:58885"/>
    </ligand>
</feature>
<sequence>MKKVELVFIPSPGAGHLVPTLQFAKRLIDRNDRISITILAIQSYFPTTLSSYTKSIAASEPRIRFIDVPQPQDRPPQEMYKSPAKFFSLYIESQVPSVKKIITNLVSSSANSSDSIRVAALVVDLFCVSMIDVAKELNIPSYLFLTSNAGYLAFMLHLPIVNEKNQIAVEESDPEWSIPGIVHPVPPRVFPVALTDGRCSAYIKLASRFRETRGIIVNTFVELETHAITLFSTDDGIPPVYPVGPVIDMDDGQAHSNLDQAQRDRIIKWLDDQPQKSVVFLCFGSMGSFRAEQVKEIALGLEQSGQRFLWSLRMPSPIGTVPCDCSNLEEVLPDGFLERTNGKKGLICGWAPQVEILAHSATGGFLSHCGWNSILESLWHGVPITTWPMYAEQQLNAFRMARELGMALEMRLDYKRGSADVVGADEIERAVVGVMEKDSEVRKKVEEMGKMARKAVKDGGSSFASVGRFIEDVIGENSGFK</sequence>
<dbReference type="EC" id="2.4.1.-" evidence="4"/>
<dbReference type="EMBL" id="FJ854495">
    <property type="protein sequence ID" value="ACZ44837.1"/>
    <property type="molecule type" value="mRNA"/>
</dbReference>
<dbReference type="SMR" id="D3UAG2"/>
<dbReference type="CAZy" id="GT1">
    <property type="family name" value="Glycosyltransferase Family 1"/>
</dbReference>
<dbReference type="GO" id="GO:0035251">
    <property type="term" value="F:UDP-glucosyltransferase activity"/>
    <property type="evidence" value="ECO:0000314"/>
    <property type="project" value="UniProtKB"/>
</dbReference>
<dbReference type="CDD" id="cd03784">
    <property type="entry name" value="GT1_Gtf-like"/>
    <property type="match status" value="1"/>
</dbReference>
<dbReference type="FunFam" id="3.40.50.2000:FF:000056">
    <property type="entry name" value="Glycosyltransferase"/>
    <property type="match status" value="1"/>
</dbReference>
<dbReference type="FunFam" id="3.40.50.2000:FF:000080">
    <property type="entry name" value="Glycosyltransferase"/>
    <property type="match status" value="1"/>
</dbReference>
<dbReference type="Gene3D" id="3.40.50.2000">
    <property type="entry name" value="Glycogen Phosphorylase B"/>
    <property type="match status" value="2"/>
</dbReference>
<dbReference type="InterPro" id="IPR050481">
    <property type="entry name" value="UDP-glycosyltransf_plant"/>
</dbReference>
<dbReference type="InterPro" id="IPR002213">
    <property type="entry name" value="UDP_glucos_trans"/>
</dbReference>
<dbReference type="InterPro" id="IPR035595">
    <property type="entry name" value="UDP_glycos_trans_CS"/>
</dbReference>
<dbReference type="PANTHER" id="PTHR48048">
    <property type="entry name" value="GLYCOSYLTRANSFERASE"/>
    <property type="match status" value="1"/>
</dbReference>
<dbReference type="PANTHER" id="PTHR48048:SF45">
    <property type="entry name" value="GLYCOSYLTRANSFERASE"/>
    <property type="match status" value="1"/>
</dbReference>
<dbReference type="Pfam" id="PF00201">
    <property type="entry name" value="UDPGT"/>
    <property type="match status" value="1"/>
</dbReference>
<dbReference type="SUPFAM" id="SSF53756">
    <property type="entry name" value="UDP-Glycosyltransferase/glycogen phosphorylase"/>
    <property type="match status" value="1"/>
</dbReference>
<dbReference type="PROSITE" id="PS00375">
    <property type="entry name" value="UDPGT"/>
    <property type="match status" value="1"/>
</dbReference>
<reference key="1">
    <citation type="journal article" date="2010" name="Plant Sci.">
        <title>Cloning and heterologous expression of glycosyltransferases from Malus x domestica and Pyrus communis, which convert phloretin to phloretin 2'-O-glucoside (phloridzin).</title>
        <authorList>
            <person name="Gosch C."/>
            <person name="Halbwirth H."/>
            <person name="Schneider B."/>
            <person name="Holscher D."/>
            <person name="Stich K."/>
        </authorList>
    </citation>
    <scope>NUCLEOTIDE SEQUENCE [MRNA]</scope>
    <scope>FUNCTION</scope>
    <scope>BIOPHYSICOCHEMICAL PROPERTIES</scope>
    <source>
        <strain>cv. Abbe Fetel</strain>
    </source>
</reference>
<name>U71K2_PYRCO</name>
<keyword id="KW-0328">Glycosyltransferase</keyword>
<keyword id="KW-0808">Transferase</keyword>
<organism>
    <name type="scientific">Pyrus communis</name>
    <name type="common">Pear</name>
    <name type="synonym">Pyrus domestica</name>
    <dbReference type="NCBI Taxonomy" id="23211"/>
    <lineage>
        <taxon>Eukaryota</taxon>
        <taxon>Viridiplantae</taxon>
        <taxon>Streptophyta</taxon>
        <taxon>Embryophyta</taxon>
        <taxon>Tracheophyta</taxon>
        <taxon>Spermatophyta</taxon>
        <taxon>Magnoliopsida</taxon>
        <taxon>eudicotyledons</taxon>
        <taxon>Gunneridae</taxon>
        <taxon>Pentapetalae</taxon>
        <taxon>rosids</taxon>
        <taxon>fabids</taxon>
        <taxon>Rosales</taxon>
        <taxon>Rosaceae</taxon>
        <taxon>Amygdaloideae</taxon>
        <taxon>Maleae</taxon>
        <taxon>Pyrus</taxon>
    </lineage>
</organism>
<proteinExistence type="evidence at protein level"/>
<protein>
    <recommendedName>
        <fullName evidence="3">UDP-glycosyltransferase 71K2</fullName>
        <ecNumber evidence="4">2.4.1.-</ecNumber>
    </recommendedName>
    <alternativeName>
        <fullName evidence="4">UDP-glucose:chalcone 2'-O-glucosyltransferase</fullName>
    </alternativeName>
    <alternativeName>
        <fullName evidence="4">UDP-glucose:flavonol 2'-O-glucosyltransferase</fullName>
    </alternativeName>
</protein>
<comment type="function">
    <text evidence="2">Glycosyltransferase that possesses chalcone and flavonol 2'-O-glycosyltransferase activity. Converts phloretin to phlorizin (phloretin 2'-O-glucoside), a potent antioxidant. Possesses glycosyltransferase activity toward quercetin, isoliquiritigenin, butein and caffeic acid.</text>
</comment>
<comment type="biophysicochemical properties">
    <phDependence>
        <text evidence="2">Optimum pH is 6.25.</text>
    </phDependence>
    <temperatureDependence>
        <text evidence="2">Optimum temperature is 25 degrees Celsius.</text>
    </temperatureDependence>
</comment>
<comment type="similarity">
    <text evidence="4">Belongs to the UDP-glycosyltransferase family.</text>
</comment>
<accession>D3UAG2</accession>
<gene>
    <name evidence="3" type="primary">UGT71K2</name>
</gene>
<evidence type="ECO:0000250" key="1">
    <source>
        <dbReference type="UniProtKB" id="Q9M156"/>
    </source>
</evidence>
<evidence type="ECO:0000269" key="2">
    <source ref="1"/>
</evidence>
<evidence type="ECO:0000303" key="3">
    <source ref="1"/>
</evidence>
<evidence type="ECO:0000305" key="4"/>